<keyword id="KW-0067">ATP-binding</keyword>
<keyword id="KW-0418">Kinase</keyword>
<keyword id="KW-0460">Magnesium</keyword>
<keyword id="KW-0479">Metal-binding</keyword>
<keyword id="KW-0547">Nucleotide-binding</keyword>
<keyword id="KW-1185">Reference proteome</keyword>
<keyword id="KW-0723">Serine/threonine-protein kinase</keyword>
<keyword id="KW-0808">Transferase</keyword>
<keyword id="KW-0810">Translation regulation</keyword>
<gene>
    <name type="primary">mknk1</name>
</gene>
<protein>
    <recommendedName>
        <fullName>MAP kinase-interacting serine/threonine-protein kinase 1</fullName>
        <ecNumber evidence="2">2.7.11.1</ecNumber>
    </recommendedName>
    <alternativeName>
        <fullName>MAP kinase signal-integrating kinase 1</fullName>
        <shortName>MAPK signal-integrating kinase 1</shortName>
        <shortName>Mnk1</shortName>
    </alternativeName>
</protein>
<accession>Q66JF3</accession>
<evidence type="ECO:0000250" key="1"/>
<evidence type="ECO:0000250" key="2">
    <source>
        <dbReference type="UniProtKB" id="Q9BUB5"/>
    </source>
</evidence>
<evidence type="ECO:0000255" key="3">
    <source>
        <dbReference type="PROSITE-ProRule" id="PRU00159"/>
    </source>
</evidence>
<evidence type="ECO:0000255" key="4">
    <source>
        <dbReference type="PROSITE-ProRule" id="PRU10027"/>
    </source>
</evidence>
<evidence type="ECO:0000256" key="5">
    <source>
        <dbReference type="SAM" id="MobiDB-lite"/>
    </source>
</evidence>
<evidence type="ECO:0000305" key="6"/>
<proteinExistence type="evidence at transcript level"/>
<name>MKNK1_XENTR</name>
<organism>
    <name type="scientific">Xenopus tropicalis</name>
    <name type="common">Western clawed frog</name>
    <name type="synonym">Silurana tropicalis</name>
    <dbReference type="NCBI Taxonomy" id="8364"/>
    <lineage>
        <taxon>Eukaryota</taxon>
        <taxon>Metazoa</taxon>
        <taxon>Chordata</taxon>
        <taxon>Craniata</taxon>
        <taxon>Vertebrata</taxon>
        <taxon>Euteleostomi</taxon>
        <taxon>Amphibia</taxon>
        <taxon>Batrachia</taxon>
        <taxon>Anura</taxon>
        <taxon>Pipoidea</taxon>
        <taxon>Pipidae</taxon>
        <taxon>Xenopodinae</taxon>
        <taxon>Xenopus</taxon>
        <taxon>Silurana</taxon>
    </lineage>
</organism>
<feature type="chain" id="PRO_0000226971" description="MAP kinase-interacting serine/threonine-protein kinase 1">
    <location>
        <begin position="1"/>
        <end position="417"/>
    </location>
</feature>
<feature type="domain" description="Protein kinase" evidence="3">
    <location>
        <begin position="37"/>
        <end position="321"/>
    </location>
</feature>
<feature type="region of interest" description="Disordered" evidence="5">
    <location>
        <begin position="1"/>
        <end position="20"/>
    </location>
</feature>
<feature type="region of interest" description="Disordered" evidence="5">
    <location>
        <begin position="397"/>
        <end position="417"/>
    </location>
</feature>
<feature type="compositionally biased region" description="Polar residues" evidence="5">
    <location>
        <begin position="406"/>
        <end position="417"/>
    </location>
</feature>
<feature type="active site" description="Proton acceptor" evidence="3 4">
    <location>
        <position position="158"/>
    </location>
</feature>
<feature type="binding site" evidence="3">
    <location>
        <begin position="43"/>
        <end position="51"/>
    </location>
    <ligand>
        <name>ATP</name>
        <dbReference type="ChEBI" id="CHEBI:30616"/>
    </ligand>
</feature>
<feature type="binding site" evidence="3">
    <location>
        <position position="66"/>
    </location>
    <ligand>
        <name>ATP</name>
        <dbReference type="ChEBI" id="CHEBI:30616"/>
    </ligand>
</feature>
<reference key="1">
    <citation type="submission" date="2004-08" db="EMBL/GenBank/DDBJ databases">
        <authorList>
            <consortium name="NIH - Xenopus Gene Collection (XGC) project"/>
        </authorList>
    </citation>
    <scope>NUCLEOTIDE SEQUENCE [LARGE SCALE MRNA]</scope>
    <source>
        <tissue>Embryo</tissue>
    </source>
</reference>
<comment type="function">
    <text evidence="1">May play a role in the response to environmental stress and cytokines. Appears to regulate translation by phosphorylating EIF4E, thus increasing the affinity of this protein for the 7-methylguanosine-containing mRNA cap (By similarity).</text>
</comment>
<comment type="catalytic activity">
    <reaction evidence="2">
        <text>L-seryl-[protein] + ATP = O-phospho-L-seryl-[protein] + ADP + H(+)</text>
        <dbReference type="Rhea" id="RHEA:17989"/>
        <dbReference type="Rhea" id="RHEA-COMP:9863"/>
        <dbReference type="Rhea" id="RHEA-COMP:11604"/>
        <dbReference type="ChEBI" id="CHEBI:15378"/>
        <dbReference type="ChEBI" id="CHEBI:29999"/>
        <dbReference type="ChEBI" id="CHEBI:30616"/>
        <dbReference type="ChEBI" id="CHEBI:83421"/>
        <dbReference type="ChEBI" id="CHEBI:456216"/>
        <dbReference type="EC" id="2.7.11.1"/>
    </reaction>
</comment>
<comment type="catalytic activity">
    <reaction evidence="2">
        <text>L-threonyl-[protein] + ATP = O-phospho-L-threonyl-[protein] + ADP + H(+)</text>
        <dbReference type="Rhea" id="RHEA:46608"/>
        <dbReference type="Rhea" id="RHEA-COMP:11060"/>
        <dbReference type="Rhea" id="RHEA-COMP:11605"/>
        <dbReference type="ChEBI" id="CHEBI:15378"/>
        <dbReference type="ChEBI" id="CHEBI:30013"/>
        <dbReference type="ChEBI" id="CHEBI:30616"/>
        <dbReference type="ChEBI" id="CHEBI:61977"/>
        <dbReference type="ChEBI" id="CHEBI:456216"/>
        <dbReference type="EC" id="2.7.11.1"/>
    </reaction>
</comment>
<comment type="cofactor">
    <cofactor evidence="2">
        <name>Mg(2+)</name>
        <dbReference type="ChEBI" id="CHEBI:18420"/>
    </cofactor>
</comment>
<comment type="similarity">
    <text evidence="6">Belongs to the protein kinase superfamily. CAMK Ser/Thr protein kinase family.</text>
</comment>
<sequence>MVSSQPVPIDDGGKRRKKKRRTRAMESFTGKFADLYRLTDELLGEGAYAKVQGCVSLQNGKDYAVKIVEKKAGHSRSRVFREVETLYQCQGNKNILELIEFCEDDARFYLVFEKLRGGSILSHIQKRKHFNEREASKVVKDIASALDFLHTKGIAHRDLKPENILCEFKDKVSPVKICDFDLGSGVKLNSACTPITTPELTTPCGSAEYMAPEVVEVFTEEATFYDKRCDLWSLGVILYIMLSGYPPFVGNCGADCGWDRGEMCRVCQNKLFESIQEGKYEFPEKDWSHISNSAKDLISKLLVRDAKERLSAAQVLQHPWLQGDAPERGLPTPLVLQRNSSTKDLTIFAAEAVALNRQLSQHDSDLNEEHESFIHTVCSMRLSPPSKSRLAKRRAQAHARKGGSHLTHTTVTSQGAT</sequence>
<dbReference type="EC" id="2.7.11.1" evidence="2"/>
<dbReference type="EMBL" id="BC080937">
    <property type="protein sequence ID" value="AAH80937.1"/>
    <property type="molecule type" value="mRNA"/>
</dbReference>
<dbReference type="RefSeq" id="NP_001008051.1">
    <property type="nucleotide sequence ID" value="NM_001008050.1"/>
</dbReference>
<dbReference type="RefSeq" id="XP_031755886.1">
    <property type="nucleotide sequence ID" value="XM_031900026.1"/>
</dbReference>
<dbReference type="SMR" id="Q66JF3"/>
<dbReference type="FunCoup" id="Q66JF3">
    <property type="interactions" value="3012"/>
</dbReference>
<dbReference type="PaxDb" id="8364-ENSXETP00000058994"/>
<dbReference type="DNASU" id="493413"/>
<dbReference type="GeneID" id="493413"/>
<dbReference type="KEGG" id="xtr:493413"/>
<dbReference type="AGR" id="Xenbase:XB-GENE-979969"/>
<dbReference type="CTD" id="8569"/>
<dbReference type="Xenbase" id="XB-GENE-979969">
    <property type="gene designation" value="mknk1"/>
</dbReference>
<dbReference type="eggNOG" id="KOG0607">
    <property type="taxonomic scope" value="Eukaryota"/>
</dbReference>
<dbReference type="InParanoid" id="Q66JF3"/>
<dbReference type="OMA" id="GTFNDLY"/>
<dbReference type="OrthoDB" id="5794026at2759"/>
<dbReference type="Reactome" id="R-XTR-1295596">
    <property type="pathway name" value="Spry regulation of FGF signaling"/>
</dbReference>
<dbReference type="Proteomes" id="UP000008143">
    <property type="component" value="Chromosome 4"/>
</dbReference>
<dbReference type="GO" id="GO:0005524">
    <property type="term" value="F:ATP binding"/>
    <property type="evidence" value="ECO:0007669"/>
    <property type="project" value="UniProtKB-KW"/>
</dbReference>
<dbReference type="GO" id="GO:0046872">
    <property type="term" value="F:metal ion binding"/>
    <property type="evidence" value="ECO:0007669"/>
    <property type="project" value="UniProtKB-KW"/>
</dbReference>
<dbReference type="GO" id="GO:0106310">
    <property type="term" value="F:protein serine kinase activity"/>
    <property type="evidence" value="ECO:0007669"/>
    <property type="project" value="RHEA"/>
</dbReference>
<dbReference type="GO" id="GO:0004674">
    <property type="term" value="F:protein serine/threonine kinase activity"/>
    <property type="evidence" value="ECO:0007669"/>
    <property type="project" value="UniProtKB-KW"/>
</dbReference>
<dbReference type="GO" id="GO:0006417">
    <property type="term" value="P:regulation of translation"/>
    <property type="evidence" value="ECO:0007669"/>
    <property type="project" value="UniProtKB-KW"/>
</dbReference>
<dbReference type="CDD" id="cd14174">
    <property type="entry name" value="STKc_Mnk1"/>
    <property type="match status" value="1"/>
</dbReference>
<dbReference type="FunFam" id="1.10.510.10:FF:000119">
    <property type="entry name" value="Putative map kinase-interacting serine/threonine-protein kinase 1"/>
    <property type="match status" value="1"/>
</dbReference>
<dbReference type="FunFam" id="3.30.200.20:FF:000093">
    <property type="entry name" value="Putative map kinase-interacting serine/threonine-protein kinase 1"/>
    <property type="match status" value="1"/>
</dbReference>
<dbReference type="Gene3D" id="3.30.200.20">
    <property type="entry name" value="Phosphorylase Kinase, domain 1"/>
    <property type="match status" value="1"/>
</dbReference>
<dbReference type="Gene3D" id="1.10.510.10">
    <property type="entry name" value="Transferase(Phosphotransferase) domain 1"/>
    <property type="match status" value="1"/>
</dbReference>
<dbReference type="InterPro" id="IPR050205">
    <property type="entry name" value="CDPK_Ser/Thr_kinases"/>
</dbReference>
<dbReference type="InterPro" id="IPR011009">
    <property type="entry name" value="Kinase-like_dom_sf"/>
</dbReference>
<dbReference type="InterPro" id="IPR000719">
    <property type="entry name" value="Prot_kinase_dom"/>
</dbReference>
<dbReference type="InterPro" id="IPR017441">
    <property type="entry name" value="Protein_kinase_ATP_BS"/>
</dbReference>
<dbReference type="InterPro" id="IPR008271">
    <property type="entry name" value="Ser/Thr_kinase_AS"/>
</dbReference>
<dbReference type="PANTHER" id="PTHR24349">
    <property type="entry name" value="SERINE/THREONINE-PROTEIN KINASE"/>
    <property type="match status" value="1"/>
</dbReference>
<dbReference type="Pfam" id="PF00069">
    <property type="entry name" value="Pkinase"/>
    <property type="match status" value="1"/>
</dbReference>
<dbReference type="SMART" id="SM00220">
    <property type="entry name" value="S_TKc"/>
    <property type="match status" value="1"/>
</dbReference>
<dbReference type="SUPFAM" id="SSF56112">
    <property type="entry name" value="Protein kinase-like (PK-like)"/>
    <property type="match status" value="1"/>
</dbReference>
<dbReference type="PROSITE" id="PS00107">
    <property type="entry name" value="PROTEIN_KINASE_ATP"/>
    <property type="match status" value="1"/>
</dbReference>
<dbReference type="PROSITE" id="PS50011">
    <property type="entry name" value="PROTEIN_KINASE_DOM"/>
    <property type="match status" value="1"/>
</dbReference>
<dbReference type="PROSITE" id="PS00108">
    <property type="entry name" value="PROTEIN_KINASE_ST"/>
    <property type="match status" value="1"/>
</dbReference>